<evidence type="ECO:0000255" key="1">
    <source>
        <dbReference type="HAMAP-Rule" id="MF_01520"/>
    </source>
</evidence>
<gene>
    <name evidence="1" type="primary">ispDF</name>
    <name type="ordered locus">TM1040_1364</name>
</gene>
<comment type="function">
    <text evidence="1">Bifunctional enzyme that catalyzes the formation of 4-diphosphocytidyl-2-C-methyl-D-erythritol from CTP and 2-C-methyl-D-erythritol 4-phosphate (MEP) (IspD), and catalyzes the conversion of 4-diphosphocytidyl-2-C-methyl-D-erythritol 2-phosphate (CDP-ME2P) to 2-C-methyl-D-erythritol 2,4-cyclodiphosphate (ME-CPP) with a corresponding release of cytidine 5-monophosphate (CMP) (IspF).</text>
</comment>
<comment type="catalytic activity">
    <reaction evidence="1">
        <text>2-C-methyl-D-erythritol 4-phosphate + CTP + H(+) = 4-CDP-2-C-methyl-D-erythritol + diphosphate</text>
        <dbReference type="Rhea" id="RHEA:13429"/>
        <dbReference type="ChEBI" id="CHEBI:15378"/>
        <dbReference type="ChEBI" id="CHEBI:33019"/>
        <dbReference type="ChEBI" id="CHEBI:37563"/>
        <dbReference type="ChEBI" id="CHEBI:57823"/>
        <dbReference type="ChEBI" id="CHEBI:58262"/>
        <dbReference type="EC" id="2.7.7.60"/>
    </reaction>
</comment>
<comment type="catalytic activity">
    <reaction evidence="1">
        <text>4-CDP-2-C-methyl-D-erythritol 2-phosphate = 2-C-methyl-D-erythritol 2,4-cyclic diphosphate + CMP</text>
        <dbReference type="Rhea" id="RHEA:23864"/>
        <dbReference type="ChEBI" id="CHEBI:57919"/>
        <dbReference type="ChEBI" id="CHEBI:58483"/>
        <dbReference type="ChEBI" id="CHEBI:60377"/>
        <dbReference type="EC" id="4.6.1.12"/>
    </reaction>
</comment>
<comment type="cofactor">
    <cofactor evidence="1">
        <name>a divalent metal cation</name>
        <dbReference type="ChEBI" id="CHEBI:60240"/>
    </cofactor>
</comment>
<comment type="pathway">
    <text evidence="1">Isoprenoid biosynthesis; isopentenyl diphosphate biosynthesis via DXP pathway; isopentenyl diphosphate from 1-deoxy-D-xylulose 5-phosphate: step 2/6.</text>
</comment>
<comment type="pathway">
    <text evidence="1">Isoprenoid biosynthesis; isopentenyl diphosphate biosynthesis via DXP pathway; isopentenyl diphosphate from 1-deoxy-D-xylulose 5-phosphate: step 4/6.</text>
</comment>
<comment type="similarity">
    <text evidence="1">In the N-terminal section; belongs to the IspD/TarI cytidylyltransferase family. IspD subfamily.</text>
</comment>
<comment type="similarity">
    <text evidence="1">In the C-terminal section; belongs to the IspF family.</text>
</comment>
<name>ISPDF_RUEST</name>
<protein>
    <recommendedName>
        <fullName evidence="1">Bifunctional enzyme IspD/IspF</fullName>
    </recommendedName>
    <domain>
        <recommendedName>
            <fullName evidence="1">2-C-methyl-D-erythritol 4-phosphate cytidylyltransferase</fullName>
            <ecNumber evidence="1">2.7.7.60</ecNumber>
        </recommendedName>
        <alternativeName>
            <fullName evidence="1">4-diphosphocytidyl-2C-methyl-D-erythritol synthase</fullName>
        </alternativeName>
        <alternativeName>
            <fullName evidence="1">MEP cytidylyltransferase</fullName>
            <shortName evidence="1">MCT</shortName>
        </alternativeName>
    </domain>
    <domain>
        <recommendedName>
            <fullName evidence="1">2-C-methyl-D-erythritol 2,4-cyclodiphosphate synthase</fullName>
            <shortName evidence="1">MECDP-synthase</shortName>
            <shortName evidence="1">MECPP-synthase</shortName>
            <shortName evidence="1">MECPS</shortName>
            <ecNumber evidence="1">4.6.1.12</ecNumber>
        </recommendedName>
    </domain>
</protein>
<sequence>MTLAVLIVAAGKGTRAGGGLAKQWRPLAGRLVIDWTIEAFQRAGCGTIMVVRDPDNEHAIEALAPYPELLLADGGPSRSESVRNGLIALQEIGVERVLIHDAARPCVCPQVIQQVLDALDDTPAAAPGLAVTDALWTGADGHVTGTQDRSALFAAQTPQGFHFDAILAAHMRHDGTAADDVEVARQAGLAVRITPGDVNNIKITRPEDFSRAEHILRSTMDNIPDIRLGNGYDVHRFGPGDHVMLCGVQVPHERGLQGHSDADVGMHAVTDALYGAMAEGDIGRHFPPSDPQWKGAASDIFLRHAVELARSKGFTINNVDCTLVCEYPKVGPHAEAMRARMAEIMGMDMGRLSIKATTSERLGFTGRKEGIAALATATLVRA</sequence>
<organism>
    <name type="scientific">Ruegeria sp. (strain TM1040)</name>
    <name type="common">Silicibacter sp.</name>
    <dbReference type="NCBI Taxonomy" id="292414"/>
    <lineage>
        <taxon>Bacteria</taxon>
        <taxon>Pseudomonadati</taxon>
        <taxon>Pseudomonadota</taxon>
        <taxon>Alphaproteobacteria</taxon>
        <taxon>Rhodobacterales</taxon>
        <taxon>Roseobacteraceae</taxon>
        <taxon>Ruegeria</taxon>
    </lineage>
</organism>
<accession>Q1GGW9</accession>
<feature type="chain" id="PRO_0000296757" description="Bifunctional enzyme IspD/IspF">
    <location>
        <begin position="1"/>
        <end position="382"/>
    </location>
</feature>
<feature type="region of interest" description="2-C-methyl-D-erythritol 4-phosphate cytidylyltransferase" evidence="1">
    <location>
        <begin position="1"/>
        <end position="226"/>
    </location>
</feature>
<feature type="region of interest" description="2-C-methyl-D-erythritol 2,4-cyclodiphosphate synthase" evidence="1">
    <location>
        <begin position="227"/>
        <end position="382"/>
    </location>
</feature>
<feature type="binding site" evidence="1">
    <location>
        <begin position="233"/>
        <end position="235"/>
    </location>
    <ligand>
        <name>4-CDP-2-C-methyl-D-erythritol 2-phosphate</name>
        <dbReference type="ChEBI" id="CHEBI:57919"/>
    </ligand>
</feature>
<feature type="binding site" evidence="1">
    <location>
        <position position="233"/>
    </location>
    <ligand>
        <name>a divalent metal cation</name>
        <dbReference type="ChEBI" id="CHEBI:60240"/>
    </ligand>
</feature>
<feature type="binding site" evidence="1">
    <location>
        <position position="235"/>
    </location>
    <ligand>
        <name>a divalent metal cation</name>
        <dbReference type="ChEBI" id="CHEBI:60240"/>
    </ligand>
</feature>
<feature type="binding site" evidence="1">
    <location>
        <begin position="259"/>
        <end position="260"/>
    </location>
    <ligand>
        <name>4-CDP-2-C-methyl-D-erythritol 2-phosphate</name>
        <dbReference type="ChEBI" id="CHEBI:57919"/>
    </ligand>
</feature>
<feature type="binding site" evidence="1">
    <location>
        <position position="267"/>
    </location>
    <ligand>
        <name>a divalent metal cation</name>
        <dbReference type="ChEBI" id="CHEBI:60240"/>
    </ligand>
</feature>
<feature type="binding site" evidence="1">
    <location>
        <begin position="281"/>
        <end position="283"/>
    </location>
    <ligand>
        <name>4-CDP-2-C-methyl-D-erythritol 2-phosphate</name>
        <dbReference type="ChEBI" id="CHEBI:57919"/>
    </ligand>
</feature>
<feature type="binding site" evidence="1">
    <location>
        <begin position="357"/>
        <end position="360"/>
    </location>
    <ligand>
        <name>4-CDP-2-C-methyl-D-erythritol 2-phosphate</name>
        <dbReference type="ChEBI" id="CHEBI:57919"/>
    </ligand>
</feature>
<feature type="binding site" evidence="1">
    <location>
        <position position="364"/>
    </location>
    <ligand>
        <name>4-CDP-2-C-methyl-D-erythritol 2-phosphate</name>
        <dbReference type="ChEBI" id="CHEBI:57919"/>
    </ligand>
</feature>
<feature type="binding site" evidence="1">
    <location>
        <position position="367"/>
    </location>
    <ligand>
        <name>4-CDP-2-C-methyl-D-erythritol 2-phosphate</name>
        <dbReference type="ChEBI" id="CHEBI:57919"/>
    </ligand>
</feature>
<feature type="site" description="Transition state stabilizer" evidence="1">
    <location>
        <position position="15"/>
    </location>
</feature>
<feature type="site" description="Transition state stabilizer" evidence="1">
    <location>
        <position position="22"/>
    </location>
</feature>
<feature type="site" description="Positions MEP for the nucleophilic attack" evidence="1">
    <location>
        <position position="149"/>
    </location>
</feature>
<feature type="site" description="Positions MEP for the nucleophilic attack" evidence="1">
    <location>
        <position position="202"/>
    </location>
</feature>
<feature type="site" description="Transition state stabilizer" evidence="1">
    <location>
        <position position="259"/>
    </location>
</feature>
<feature type="site" description="Transition state stabilizer" evidence="1">
    <location>
        <position position="358"/>
    </location>
</feature>
<proteinExistence type="inferred from homology"/>
<reference key="1">
    <citation type="submission" date="2006-05" db="EMBL/GenBank/DDBJ databases">
        <title>Complete sequence of chromosome of Silicibacter sp. TM1040.</title>
        <authorList>
            <consortium name="US DOE Joint Genome Institute"/>
            <person name="Copeland A."/>
            <person name="Lucas S."/>
            <person name="Lapidus A."/>
            <person name="Barry K."/>
            <person name="Detter J.C."/>
            <person name="Glavina del Rio T."/>
            <person name="Hammon N."/>
            <person name="Israni S."/>
            <person name="Dalin E."/>
            <person name="Tice H."/>
            <person name="Pitluck S."/>
            <person name="Brettin T."/>
            <person name="Bruce D."/>
            <person name="Han C."/>
            <person name="Tapia R."/>
            <person name="Goodwin L."/>
            <person name="Thompson L.S."/>
            <person name="Gilna P."/>
            <person name="Schmutz J."/>
            <person name="Larimer F."/>
            <person name="Land M."/>
            <person name="Hauser L."/>
            <person name="Kyrpides N."/>
            <person name="Kim E."/>
            <person name="Belas R."/>
            <person name="Moran M.A."/>
            <person name="Buchan A."/>
            <person name="Gonzalez J.M."/>
            <person name="Schell M.A."/>
            <person name="Sun F."/>
            <person name="Richardson P."/>
        </authorList>
    </citation>
    <scope>NUCLEOTIDE SEQUENCE [LARGE SCALE GENOMIC DNA]</scope>
    <source>
        <strain>TM1040</strain>
    </source>
</reference>
<keyword id="KW-0414">Isoprene biosynthesis</keyword>
<keyword id="KW-0456">Lyase</keyword>
<keyword id="KW-0479">Metal-binding</keyword>
<keyword id="KW-0511">Multifunctional enzyme</keyword>
<keyword id="KW-0548">Nucleotidyltransferase</keyword>
<keyword id="KW-1185">Reference proteome</keyword>
<keyword id="KW-0808">Transferase</keyword>
<dbReference type="EC" id="2.7.7.60" evidence="1"/>
<dbReference type="EC" id="4.6.1.12" evidence="1"/>
<dbReference type="EMBL" id="CP000377">
    <property type="protein sequence ID" value="ABF64097.1"/>
    <property type="molecule type" value="Genomic_DNA"/>
</dbReference>
<dbReference type="RefSeq" id="WP_011538702.1">
    <property type="nucleotide sequence ID" value="NC_008044.1"/>
</dbReference>
<dbReference type="SMR" id="Q1GGW9"/>
<dbReference type="STRING" id="292414.TM1040_1364"/>
<dbReference type="KEGG" id="sit:TM1040_1364"/>
<dbReference type="eggNOG" id="COG0245">
    <property type="taxonomic scope" value="Bacteria"/>
</dbReference>
<dbReference type="eggNOG" id="COG1211">
    <property type="taxonomic scope" value="Bacteria"/>
</dbReference>
<dbReference type="HOGENOM" id="CLU_042800_2_5_5"/>
<dbReference type="OrthoDB" id="9804336at2"/>
<dbReference type="UniPathway" id="UPA00056">
    <property type="reaction ID" value="UER00093"/>
</dbReference>
<dbReference type="UniPathway" id="UPA00056">
    <property type="reaction ID" value="UER00095"/>
</dbReference>
<dbReference type="Proteomes" id="UP000000636">
    <property type="component" value="Chromosome"/>
</dbReference>
<dbReference type="GO" id="GO:0008685">
    <property type="term" value="F:2-C-methyl-D-erythritol 2,4-cyclodiphosphate synthase activity"/>
    <property type="evidence" value="ECO:0007669"/>
    <property type="project" value="UniProtKB-UniRule"/>
</dbReference>
<dbReference type="GO" id="GO:0050518">
    <property type="term" value="F:2-C-methyl-D-erythritol 4-phosphate cytidylyltransferase activity"/>
    <property type="evidence" value="ECO:0007669"/>
    <property type="project" value="UniProtKB-UniRule"/>
</dbReference>
<dbReference type="GO" id="GO:0046872">
    <property type="term" value="F:metal ion binding"/>
    <property type="evidence" value="ECO:0007669"/>
    <property type="project" value="UniProtKB-KW"/>
</dbReference>
<dbReference type="GO" id="GO:0019288">
    <property type="term" value="P:isopentenyl diphosphate biosynthetic process, methylerythritol 4-phosphate pathway"/>
    <property type="evidence" value="ECO:0007669"/>
    <property type="project" value="UniProtKB-UniRule"/>
</dbReference>
<dbReference type="GO" id="GO:0016114">
    <property type="term" value="P:terpenoid biosynthetic process"/>
    <property type="evidence" value="ECO:0007669"/>
    <property type="project" value="InterPro"/>
</dbReference>
<dbReference type="CDD" id="cd02516">
    <property type="entry name" value="CDP-ME_synthetase"/>
    <property type="match status" value="1"/>
</dbReference>
<dbReference type="CDD" id="cd00554">
    <property type="entry name" value="MECDP_synthase"/>
    <property type="match status" value="1"/>
</dbReference>
<dbReference type="Gene3D" id="3.30.1330.50">
    <property type="entry name" value="2-C-methyl-D-erythritol 2,4-cyclodiphosphate synthase"/>
    <property type="match status" value="1"/>
</dbReference>
<dbReference type="Gene3D" id="3.90.550.10">
    <property type="entry name" value="Spore Coat Polysaccharide Biosynthesis Protein SpsA, Chain A"/>
    <property type="match status" value="1"/>
</dbReference>
<dbReference type="HAMAP" id="MF_00108">
    <property type="entry name" value="IspD"/>
    <property type="match status" value="1"/>
</dbReference>
<dbReference type="HAMAP" id="MF_01520">
    <property type="entry name" value="IspDF"/>
    <property type="match status" value="1"/>
</dbReference>
<dbReference type="HAMAP" id="MF_00107">
    <property type="entry name" value="IspF"/>
    <property type="match status" value="1"/>
</dbReference>
<dbReference type="InterPro" id="IPR001228">
    <property type="entry name" value="IspD"/>
</dbReference>
<dbReference type="InterPro" id="IPR026596">
    <property type="entry name" value="IspD/F"/>
</dbReference>
<dbReference type="InterPro" id="IPR034683">
    <property type="entry name" value="IspD/TarI"/>
</dbReference>
<dbReference type="InterPro" id="IPR018294">
    <property type="entry name" value="ISPD_synthase_CS"/>
</dbReference>
<dbReference type="InterPro" id="IPR003526">
    <property type="entry name" value="MECDP_synthase"/>
</dbReference>
<dbReference type="InterPro" id="IPR020555">
    <property type="entry name" value="MECDP_synthase_CS"/>
</dbReference>
<dbReference type="InterPro" id="IPR036571">
    <property type="entry name" value="MECDP_synthase_sf"/>
</dbReference>
<dbReference type="InterPro" id="IPR029044">
    <property type="entry name" value="Nucleotide-diphossugar_trans"/>
</dbReference>
<dbReference type="NCBIfam" id="TIGR00453">
    <property type="entry name" value="ispD"/>
    <property type="match status" value="1"/>
</dbReference>
<dbReference type="NCBIfam" id="TIGR00151">
    <property type="entry name" value="ispF"/>
    <property type="match status" value="1"/>
</dbReference>
<dbReference type="NCBIfam" id="NF006899">
    <property type="entry name" value="PRK09382.1"/>
    <property type="match status" value="1"/>
</dbReference>
<dbReference type="PANTHER" id="PTHR43181">
    <property type="entry name" value="2-C-METHYL-D-ERYTHRITOL 2,4-CYCLODIPHOSPHATE SYNTHASE, CHLOROPLASTIC"/>
    <property type="match status" value="1"/>
</dbReference>
<dbReference type="PANTHER" id="PTHR43181:SF1">
    <property type="entry name" value="2-C-METHYL-D-ERYTHRITOL 2,4-CYCLODIPHOSPHATE SYNTHASE, CHLOROPLASTIC"/>
    <property type="match status" value="1"/>
</dbReference>
<dbReference type="Pfam" id="PF01128">
    <property type="entry name" value="IspD"/>
    <property type="match status" value="1"/>
</dbReference>
<dbReference type="Pfam" id="PF02542">
    <property type="entry name" value="YgbB"/>
    <property type="match status" value="1"/>
</dbReference>
<dbReference type="SUPFAM" id="SSF69765">
    <property type="entry name" value="IpsF-like"/>
    <property type="match status" value="1"/>
</dbReference>
<dbReference type="SUPFAM" id="SSF53448">
    <property type="entry name" value="Nucleotide-diphospho-sugar transferases"/>
    <property type="match status" value="1"/>
</dbReference>
<dbReference type="PROSITE" id="PS01295">
    <property type="entry name" value="ISPD"/>
    <property type="match status" value="1"/>
</dbReference>
<dbReference type="PROSITE" id="PS01350">
    <property type="entry name" value="ISPF"/>
    <property type="match status" value="1"/>
</dbReference>